<dbReference type="EC" id="4.2.1.19" evidence="1"/>
<dbReference type="EMBL" id="CP000910">
    <property type="protein sequence ID" value="ABY22483.1"/>
    <property type="molecule type" value="Genomic_DNA"/>
</dbReference>
<dbReference type="RefSeq" id="WP_012244182.1">
    <property type="nucleotide sequence ID" value="NC_010168.1"/>
</dbReference>
<dbReference type="SMR" id="A9WQ57"/>
<dbReference type="STRING" id="288705.RSal33209_0736"/>
<dbReference type="KEGG" id="rsa:RSal33209_0736"/>
<dbReference type="eggNOG" id="COG0131">
    <property type="taxonomic scope" value="Bacteria"/>
</dbReference>
<dbReference type="HOGENOM" id="CLU_044308_3_0_11"/>
<dbReference type="UniPathway" id="UPA00031">
    <property type="reaction ID" value="UER00011"/>
</dbReference>
<dbReference type="Proteomes" id="UP000002007">
    <property type="component" value="Chromosome"/>
</dbReference>
<dbReference type="GO" id="GO:0005737">
    <property type="term" value="C:cytoplasm"/>
    <property type="evidence" value="ECO:0007669"/>
    <property type="project" value="UniProtKB-SubCell"/>
</dbReference>
<dbReference type="GO" id="GO:0004424">
    <property type="term" value="F:imidazoleglycerol-phosphate dehydratase activity"/>
    <property type="evidence" value="ECO:0007669"/>
    <property type="project" value="UniProtKB-UniRule"/>
</dbReference>
<dbReference type="GO" id="GO:0000105">
    <property type="term" value="P:L-histidine biosynthetic process"/>
    <property type="evidence" value="ECO:0007669"/>
    <property type="project" value="UniProtKB-UniRule"/>
</dbReference>
<dbReference type="CDD" id="cd07914">
    <property type="entry name" value="IGPD"/>
    <property type="match status" value="1"/>
</dbReference>
<dbReference type="FunFam" id="3.30.230.40:FF:000001">
    <property type="entry name" value="Imidazoleglycerol-phosphate dehydratase HisB"/>
    <property type="match status" value="1"/>
</dbReference>
<dbReference type="FunFam" id="3.30.230.40:FF:000003">
    <property type="entry name" value="Imidazoleglycerol-phosphate dehydratase HisB"/>
    <property type="match status" value="1"/>
</dbReference>
<dbReference type="Gene3D" id="3.30.230.40">
    <property type="entry name" value="Imidazole glycerol phosphate dehydratase, domain 1"/>
    <property type="match status" value="2"/>
</dbReference>
<dbReference type="HAMAP" id="MF_00076">
    <property type="entry name" value="HisB"/>
    <property type="match status" value="1"/>
</dbReference>
<dbReference type="InterPro" id="IPR038494">
    <property type="entry name" value="IGPD_sf"/>
</dbReference>
<dbReference type="InterPro" id="IPR000807">
    <property type="entry name" value="ImidazoleglycerolP_deHydtase"/>
</dbReference>
<dbReference type="InterPro" id="IPR020565">
    <property type="entry name" value="ImidazoleglycerP_deHydtase_CS"/>
</dbReference>
<dbReference type="InterPro" id="IPR020568">
    <property type="entry name" value="Ribosomal_Su5_D2-typ_SF"/>
</dbReference>
<dbReference type="NCBIfam" id="NF002110">
    <property type="entry name" value="PRK00951.1-6"/>
    <property type="match status" value="1"/>
</dbReference>
<dbReference type="NCBIfam" id="NF002111">
    <property type="entry name" value="PRK00951.2-1"/>
    <property type="match status" value="1"/>
</dbReference>
<dbReference type="NCBIfam" id="NF002114">
    <property type="entry name" value="PRK00951.2-4"/>
    <property type="match status" value="1"/>
</dbReference>
<dbReference type="PANTHER" id="PTHR23133:SF2">
    <property type="entry name" value="IMIDAZOLEGLYCEROL-PHOSPHATE DEHYDRATASE"/>
    <property type="match status" value="1"/>
</dbReference>
<dbReference type="PANTHER" id="PTHR23133">
    <property type="entry name" value="IMIDAZOLEGLYCEROL-PHOSPHATE DEHYDRATASE HIS7"/>
    <property type="match status" value="1"/>
</dbReference>
<dbReference type="Pfam" id="PF00475">
    <property type="entry name" value="IGPD"/>
    <property type="match status" value="1"/>
</dbReference>
<dbReference type="SUPFAM" id="SSF54211">
    <property type="entry name" value="Ribosomal protein S5 domain 2-like"/>
    <property type="match status" value="2"/>
</dbReference>
<dbReference type="PROSITE" id="PS00954">
    <property type="entry name" value="IGP_DEHYDRATASE_1"/>
    <property type="match status" value="1"/>
</dbReference>
<dbReference type="PROSITE" id="PS00955">
    <property type="entry name" value="IGP_DEHYDRATASE_2"/>
    <property type="match status" value="1"/>
</dbReference>
<protein>
    <recommendedName>
        <fullName evidence="1">Imidazoleglycerol-phosphate dehydratase</fullName>
        <shortName evidence="1">IGPD</shortName>
        <ecNumber evidence="1">4.2.1.19</ecNumber>
    </recommendedName>
</protein>
<keyword id="KW-0028">Amino-acid biosynthesis</keyword>
<keyword id="KW-0963">Cytoplasm</keyword>
<keyword id="KW-0368">Histidine biosynthesis</keyword>
<keyword id="KW-0456">Lyase</keyword>
<keyword id="KW-1185">Reference proteome</keyword>
<name>HIS7_RENSM</name>
<evidence type="ECO:0000255" key="1">
    <source>
        <dbReference type="HAMAP-Rule" id="MF_00076"/>
    </source>
</evidence>
<feature type="chain" id="PRO_1000075253" description="Imidazoleglycerol-phosphate dehydratase">
    <location>
        <begin position="1"/>
        <end position="200"/>
    </location>
</feature>
<comment type="catalytic activity">
    <reaction evidence="1">
        <text>D-erythro-1-(imidazol-4-yl)glycerol 3-phosphate = 3-(imidazol-4-yl)-2-oxopropyl phosphate + H2O</text>
        <dbReference type="Rhea" id="RHEA:11040"/>
        <dbReference type="ChEBI" id="CHEBI:15377"/>
        <dbReference type="ChEBI" id="CHEBI:57766"/>
        <dbReference type="ChEBI" id="CHEBI:58278"/>
        <dbReference type="EC" id="4.2.1.19"/>
    </reaction>
</comment>
<comment type="pathway">
    <text evidence="1">Amino-acid biosynthesis; L-histidine biosynthesis; L-histidine from 5-phospho-alpha-D-ribose 1-diphosphate: step 6/9.</text>
</comment>
<comment type="subcellular location">
    <subcellularLocation>
        <location evidence="1">Cytoplasm</location>
    </subcellularLocation>
</comment>
<comment type="similarity">
    <text evidence="1">Belongs to the imidazoleglycerol-phosphate dehydratase family.</text>
</comment>
<accession>A9WQ57</accession>
<sequence>MSMRTARLERSTSESSVLVEVNLDGTGKSEIETTVPFYNHMLTALSKHSLIDLRVKASGDTDIDVHHTVEDVAITLGEVLRTALGDKAGIRRFGEATIPLDEALAHAVVDVSGRPYLVHSGEPAGQEYHLIGGHFTGSLTRHVFEAITLHAQICLHMRVLAGRDPHHIVEAQFKAFARALRSAVESDPRVDGIPSTKGLL</sequence>
<reference key="1">
    <citation type="journal article" date="2008" name="J. Bacteriol.">
        <title>Genome sequence of the fish pathogen Renibacterium salmoninarum suggests reductive evolution away from an environmental Arthrobacter ancestor.</title>
        <authorList>
            <person name="Wiens G.D."/>
            <person name="Rockey D.D."/>
            <person name="Wu Z."/>
            <person name="Chang J."/>
            <person name="Levy R."/>
            <person name="Crane S."/>
            <person name="Chen D.S."/>
            <person name="Capri G.R."/>
            <person name="Burnett J.R."/>
            <person name="Sudheesh P.S."/>
            <person name="Schipma M.J."/>
            <person name="Burd H."/>
            <person name="Bhattacharyya A."/>
            <person name="Rhodes L.D."/>
            <person name="Kaul R."/>
            <person name="Strom M.S."/>
        </authorList>
    </citation>
    <scope>NUCLEOTIDE SEQUENCE [LARGE SCALE GENOMIC DNA]</scope>
    <source>
        <strain>ATCC 33209 / DSM 20767 / JCM 11484 / NBRC 15589 / NCIMB 2235</strain>
    </source>
</reference>
<gene>
    <name evidence="1" type="primary">hisB</name>
    <name type="ordered locus">RSal33209_0736</name>
</gene>
<proteinExistence type="inferred from homology"/>
<organism>
    <name type="scientific">Renibacterium salmoninarum (strain ATCC 33209 / DSM 20767 / JCM 11484 / NBRC 15589 / NCIMB 2235)</name>
    <dbReference type="NCBI Taxonomy" id="288705"/>
    <lineage>
        <taxon>Bacteria</taxon>
        <taxon>Bacillati</taxon>
        <taxon>Actinomycetota</taxon>
        <taxon>Actinomycetes</taxon>
        <taxon>Micrococcales</taxon>
        <taxon>Micrococcaceae</taxon>
        <taxon>Renibacterium</taxon>
    </lineage>
</organism>